<keyword id="KW-0175">Coiled coil</keyword>
<keyword id="KW-0539">Nucleus</keyword>
<keyword id="KW-0597">Phosphoprotein</keyword>
<keyword id="KW-0687">Ribonucleoprotein</keyword>
<keyword id="KW-0690">Ribosome biogenesis</keyword>
<keyword id="KW-0698">rRNA processing</keyword>
<reference key="1">
    <citation type="journal article" date="2008" name="FEMS Yeast Res.">
        <title>Comparative genome analysis of a Saccharomyces cerevisiae wine strain.</title>
        <authorList>
            <person name="Borneman A.R."/>
            <person name="Forgan A.H."/>
            <person name="Pretorius I.S."/>
            <person name="Chambers P.J."/>
        </authorList>
    </citation>
    <scope>NUCLEOTIDE SEQUENCE [LARGE SCALE GENOMIC DNA]</scope>
    <source>
        <strain>AWRI1631</strain>
    </source>
</reference>
<comment type="function">
    <text evidence="1">Component of the 90S pre-ribosome involved in the maturation of rRNAs. Required for early cleavages of the pre-RNAs in the 40S ribosomal subunit maturation pathway (By similarity).</text>
</comment>
<comment type="subunit">
    <text evidence="1">Associates with 90S and pre-40S pre-ribosomal particles. Interacts with CKA1, CKA2, CKB1, CKB2, PWP2, UTP15, UTP17 and UTP22 (By similarity).</text>
</comment>
<comment type="subcellular location">
    <subcellularLocation>
        <location evidence="1">Nucleus</location>
        <location evidence="1">Nucleolus</location>
    </subcellularLocation>
</comment>
<comment type="similarity">
    <text evidence="5">Belongs to the RRP36 family.</text>
</comment>
<protein>
    <recommendedName>
        <fullName>rRNA biogenesis protein RRP36</fullName>
    </recommendedName>
    <alternativeName>
        <fullName>Ribosomal RNA-processing protein 36</fullName>
    </alternativeName>
</protein>
<dbReference type="EMBL" id="ABSV01002226">
    <property type="protein sequence ID" value="EDZ69128.1"/>
    <property type="molecule type" value="Genomic_DNA"/>
</dbReference>
<dbReference type="SMR" id="B5VSG4"/>
<dbReference type="Proteomes" id="UP000008988">
    <property type="component" value="Unassembled WGS sequence"/>
</dbReference>
<dbReference type="GO" id="GO:0030686">
    <property type="term" value="C:90S preribosome"/>
    <property type="evidence" value="ECO:0007669"/>
    <property type="project" value="TreeGrafter"/>
</dbReference>
<dbReference type="GO" id="GO:0005730">
    <property type="term" value="C:nucleolus"/>
    <property type="evidence" value="ECO:0007669"/>
    <property type="project" value="UniProtKB-SubCell"/>
</dbReference>
<dbReference type="GO" id="GO:0000462">
    <property type="term" value="P:maturation of SSU-rRNA from tricistronic rRNA transcript (SSU-rRNA, 5.8S rRNA, LSU-rRNA)"/>
    <property type="evidence" value="ECO:0007669"/>
    <property type="project" value="TreeGrafter"/>
</dbReference>
<dbReference type="InterPro" id="IPR009292">
    <property type="entry name" value="RRP36"/>
</dbReference>
<dbReference type="PANTHER" id="PTHR21738">
    <property type="entry name" value="RIBOSOMAL RNA PROCESSING PROTEIN 36 HOMOLOG"/>
    <property type="match status" value="1"/>
</dbReference>
<dbReference type="PANTHER" id="PTHR21738:SF0">
    <property type="entry name" value="RIBOSOMAL RNA PROCESSING PROTEIN 36 HOMOLOG"/>
    <property type="match status" value="1"/>
</dbReference>
<dbReference type="Pfam" id="PF06102">
    <property type="entry name" value="RRP36"/>
    <property type="match status" value="1"/>
</dbReference>
<proteinExistence type="inferred from homology"/>
<accession>B5VSG4</accession>
<evidence type="ECO:0000250" key="1"/>
<evidence type="ECO:0000250" key="2">
    <source>
        <dbReference type="UniProtKB" id="Q12481"/>
    </source>
</evidence>
<evidence type="ECO:0000255" key="3"/>
<evidence type="ECO:0000256" key="4">
    <source>
        <dbReference type="SAM" id="MobiDB-lite"/>
    </source>
</evidence>
<evidence type="ECO:0000305" key="5"/>
<gene>
    <name type="primary">RRP36</name>
    <name type="ORF">AWRI1631_154320</name>
</gene>
<name>RRP36_YEAS6</name>
<organism>
    <name type="scientific">Saccharomyces cerevisiae (strain AWRI1631)</name>
    <name type="common">Baker's yeast</name>
    <dbReference type="NCBI Taxonomy" id="545124"/>
    <lineage>
        <taxon>Eukaryota</taxon>
        <taxon>Fungi</taxon>
        <taxon>Dikarya</taxon>
        <taxon>Ascomycota</taxon>
        <taxon>Saccharomycotina</taxon>
        <taxon>Saccharomycetes</taxon>
        <taxon>Saccharomycetales</taxon>
        <taxon>Saccharomycetaceae</taxon>
        <taxon>Saccharomyces</taxon>
    </lineage>
</organism>
<sequence>MSYYFKNLKPDLNSDVEEDDGNLLESIMANKSKREIDEQESSDDELKTLSFGSLKKAETIIDEEDFKDTKPVHKKPITTTYREESFDEDDDSEDKSDEDAGFFEEDSEDETHHGQKVPKKKSKHAPIEQSSKKRVPRVRNIPGLEIPRNKRSNLYQDIRFDKSTGKALDSSIIRKRYQFLDEYREKEIDELQKLLQDRKFLSKIDQGEREEMEQRLKSMKSRLQSMKNKDLEREILKEYESDMNKNNNTRYHLKKSEKRKVVQKWKFDHMKAKQREKVMERKRKKRLGKEFKQFEFHNRR</sequence>
<feature type="chain" id="PRO_0000397655" description="rRNA biogenesis protein RRP36">
    <location>
        <begin position="1"/>
        <end position="300"/>
    </location>
</feature>
<feature type="region of interest" description="Disordered" evidence="4">
    <location>
        <begin position="60"/>
        <end position="146"/>
    </location>
</feature>
<feature type="coiled-coil region" evidence="3">
    <location>
        <begin position="203"/>
        <end position="232"/>
    </location>
</feature>
<feature type="compositionally biased region" description="Acidic residues" evidence="4">
    <location>
        <begin position="85"/>
        <end position="109"/>
    </location>
</feature>
<feature type="compositionally biased region" description="Basic residues" evidence="4">
    <location>
        <begin position="114"/>
        <end position="124"/>
    </location>
</feature>
<feature type="modified residue" description="Phosphoserine" evidence="2">
    <location>
        <position position="14"/>
    </location>
</feature>
<feature type="modified residue" description="Phosphoserine" evidence="2">
    <location>
        <position position="41"/>
    </location>
</feature>
<feature type="modified residue" description="Phosphoserine" evidence="2">
    <location>
        <position position="42"/>
    </location>
</feature>